<evidence type="ECO:0000255" key="1">
    <source>
        <dbReference type="HAMAP-Rule" id="MF_01395"/>
    </source>
</evidence>
<evidence type="ECO:0000255" key="2">
    <source>
        <dbReference type="PROSITE-ProRule" id="PRU01136"/>
    </source>
</evidence>
<protein>
    <recommendedName>
        <fullName evidence="1">Acetyl-coenzyme A carboxylase carboxyl transferase subunit beta</fullName>
        <shortName evidence="1">ACCase subunit beta</shortName>
        <shortName evidence="1">Acetyl-CoA carboxylase carboxyltransferase subunit beta</shortName>
        <ecNumber evidence="1">2.1.3.15</ecNumber>
    </recommendedName>
</protein>
<dbReference type="EC" id="2.1.3.15" evidence="1"/>
<dbReference type="EMBL" id="AE017194">
    <property type="protein sequence ID" value="AAS43633.1"/>
    <property type="molecule type" value="Genomic_DNA"/>
</dbReference>
<dbReference type="SMR" id="Q72ZD6"/>
<dbReference type="KEGG" id="bca:BCE_4732"/>
<dbReference type="HOGENOM" id="CLU_015486_1_1_9"/>
<dbReference type="UniPathway" id="UPA00655">
    <property type="reaction ID" value="UER00711"/>
</dbReference>
<dbReference type="Proteomes" id="UP000002527">
    <property type="component" value="Chromosome"/>
</dbReference>
<dbReference type="GO" id="GO:0009317">
    <property type="term" value="C:acetyl-CoA carboxylase complex"/>
    <property type="evidence" value="ECO:0007669"/>
    <property type="project" value="InterPro"/>
</dbReference>
<dbReference type="GO" id="GO:0003989">
    <property type="term" value="F:acetyl-CoA carboxylase activity"/>
    <property type="evidence" value="ECO:0007669"/>
    <property type="project" value="InterPro"/>
</dbReference>
<dbReference type="GO" id="GO:0005524">
    <property type="term" value="F:ATP binding"/>
    <property type="evidence" value="ECO:0007669"/>
    <property type="project" value="UniProtKB-KW"/>
</dbReference>
<dbReference type="GO" id="GO:0016743">
    <property type="term" value="F:carboxyl- or carbamoyltransferase activity"/>
    <property type="evidence" value="ECO:0007669"/>
    <property type="project" value="UniProtKB-UniRule"/>
</dbReference>
<dbReference type="GO" id="GO:0008270">
    <property type="term" value="F:zinc ion binding"/>
    <property type="evidence" value="ECO:0007669"/>
    <property type="project" value="UniProtKB-UniRule"/>
</dbReference>
<dbReference type="GO" id="GO:0006633">
    <property type="term" value="P:fatty acid biosynthetic process"/>
    <property type="evidence" value="ECO:0007669"/>
    <property type="project" value="UniProtKB-KW"/>
</dbReference>
<dbReference type="GO" id="GO:2001295">
    <property type="term" value="P:malonyl-CoA biosynthetic process"/>
    <property type="evidence" value="ECO:0007669"/>
    <property type="project" value="UniProtKB-UniRule"/>
</dbReference>
<dbReference type="Gene3D" id="3.90.226.10">
    <property type="entry name" value="2-enoyl-CoA Hydratase, Chain A, domain 1"/>
    <property type="match status" value="1"/>
</dbReference>
<dbReference type="HAMAP" id="MF_01395">
    <property type="entry name" value="AcetylCoA_CT_beta"/>
    <property type="match status" value="1"/>
</dbReference>
<dbReference type="InterPro" id="IPR034733">
    <property type="entry name" value="AcCoA_carboxyl_beta"/>
</dbReference>
<dbReference type="InterPro" id="IPR000438">
    <property type="entry name" value="Acetyl_CoA_COase_Trfase_b_su"/>
</dbReference>
<dbReference type="InterPro" id="IPR029045">
    <property type="entry name" value="ClpP/crotonase-like_dom_sf"/>
</dbReference>
<dbReference type="InterPro" id="IPR011762">
    <property type="entry name" value="COA_CT_N"/>
</dbReference>
<dbReference type="InterPro" id="IPR041010">
    <property type="entry name" value="Znf-ACC"/>
</dbReference>
<dbReference type="NCBIfam" id="TIGR00515">
    <property type="entry name" value="accD"/>
    <property type="match status" value="1"/>
</dbReference>
<dbReference type="PANTHER" id="PTHR42995">
    <property type="entry name" value="ACETYL-COENZYME A CARBOXYLASE CARBOXYL TRANSFERASE SUBUNIT BETA, CHLOROPLASTIC"/>
    <property type="match status" value="1"/>
</dbReference>
<dbReference type="PANTHER" id="PTHR42995:SF5">
    <property type="entry name" value="ACETYL-COENZYME A CARBOXYLASE CARBOXYL TRANSFERASE SUBUNIT BETA, CHLOROPLASTIC"/>
    <property type="match status" value="1"/>
</dbReference>
<dbReference type="Pfam" id="PF01039">
    <property type="entry name" value="Carboxyl_trans"/>
    <property type="match status" value="1"/>
</dbReference>
<dbReference type="Pfam" id="PF17848">
    <property type="entry name" value="Zn_ribbon_ACC"/>
    <property type="match status" value="1"/>
</dbReference>
<dbReference type="PRINTS" id="PR01070">
    <property type="entry name" value="ACCCTRFRASEB"/>
</dbReference>
<dbReference type="SUPFAM" id="SSF52096">
    <property type="entry name" value="ClpP/crotonase"/>
    <property type="match status" value="1"/>
</dbReference>
<dbReference type="PROSITE" id="PS50980">
    <property type="entry name" value="COA_CT_NTER"/>
    <property type="match status" value="1"/>
</dbReference>
<sequence>MLRDLFVKKKKYAAIPSEQVRKDVPDGVMTKCPKCKKIMYTKELLKNLKVCVNCGYHHPMNAWERLDSILDEGSFREYDKEMVSLNPLEFPGYEEKLESDRKKTELNEAVVTGEGTIDDMLVVVAVMDSRFRMGSMGSVVGEKIARAVEKAYDLQVPFIIFTASGGARMQEGILSLMQMAKTSVALKKHSNAGGLFISVMTHPTTGGVSASFASLGDYNLAEPGALIGFAGRRVIEQTVREKLPEDFQTAEFLLEHGQLDAVVHRDDMRESLRKILEVHQGGEMAVWQS</sequence>
<proteinExistence type="inferred from homology"/>
<keyword id="KW-0067">ATP-binding</keyword>
<keyword id="KW-0963">Cytoplasm</keyword>
<keyword id="KW-0275">Fatty acid biosynthesis</keyword>
<keyword id="KW-0276">Fatty acid metabolism</keyword>
<keyword id="KW-0444">Lipid biosynthesis</keyword>
<keyword id="KW-0443">Lipid metabolism</keyword>
<keyword id="KW-0479">Metal-binding</keyword>
<keyword id="KW-0547">Nucleotide-binding</keyword>
<keyword id="KW-0808">Transferase</keyword>
<keyword id="KW-0862">Zinc</keyword>
<keyword id="KW-0863">Zinc-finger</keyword>
<accession>Q72ZD6</accession>
<feature type="chain" id="PRO_0000389675" description="Acetyl-coenzyme A carboxylase carboxyl transferase subunit beta">
    <location>
        <begin position="1"/>
        <end position="289"/>
    </location>
</feature>
<feature type="domain" description="CoA carboxyltransferase N-terminal" evidence="2">
    <location>
        <begin position="28"/>
        <end position="289"/>
    </location>
</feature>
<feature type="zinc finger region" description="C4-type" evidence="1">
    <location>
        <begin position="32"/>
        <end position="54"/>
    </location>
</feature>
<feature type="binding site" evidence="1">
    <location>
        <position position="32"/>
    </location>
    <ligand>
        <name>Zn(2+)</name>
        <dbReference type="ChEBI" id="CHEBI:29105"/>
    </ligand>
</feature>
<feature type="binding site" evidence="1">
    <location>
        <position position="35"/>
    </location>
    <ligand>
        <name>Zn(2+)</name>
        <dbReference type="ChEBI" id="CHEBI:29105"/>
    </ligand>
</feature>
<feature type="binding site" evidence="1">
    <location>
        <position position="51"/>
    </location>
    <ligand>
        <name>Zn(2+)</name>
        <dbReference type="ChEBI" id="CHEBI:29105"/>
    </ligand>
</feature>
<feature type="binding site" evidence="1">
    <location>
        <position position="54"/>
    </location>
    <ligand>
        <name>Zn(2+)</name>
        <dbReference type="ChEBI" id="CHEBI:29105"/>
    </ligand>
</feature>
<name>ACCD_BACC1</name>
<reference key="1">
    <citation type="journal article" date="2004" name="Nucleic Acids Res.">
        <title>The genome sequence of Bacillus cereus ATCC 10987 reveals metabolic adaptations and a large plasmid related to Bacillus anthracis pXO1.</title>
        <authorList>
            <person name="Rasko D.A."/>
            <person name="Ravel J."/>
            <person name="Oekstad O.A."/>
            <person name="Helgason E."/>
            <person name="Cer R.Z."/>
            <person name="Jiang L."/>
            <person name="Shores K.A."/>
            <person name="Fouts D.E."/>
            <person name="Tourasse N.J."/>
            <person name="Angiuoli S.V."/>
            <person name="Kolonay J.F."/>
            <person name="Nelson W.C."/>
            <person name="Kolstoe A.-B."/>
            <person name="Fraser C.M."/>
            <person name="Read T.D."/>
        </authorList>
    </citation>
    <scope>NUCLEOTIDE SEQUENCE [LARGE SCALE GENOMIC DNA]</scope>
    <source>
        <strain>ATCC 10987 / NRS 248</strain>
    </source>
</reference>
<comment type="function">
    <text evidence="1">Component of the acetyl coenzyme A carboxylase (ACC) complex. Biotin carboxylase (BC) catalyzes the carboxylation of biotin on its carrier protein (BCCP) and then the CO(2) group is transferred by the transcarboxylase to acetyl-CoA to form malonyl-CoA.</text>
</comment>
<comment type="catalytic activity">
    <reaction evidence="1">
        <text>N(6)-carboxybiotinyl-L-lysyl-[protein] + acetyl-CoA = N(6)-biotinyl-L-lysyl-[protein] + malonyl-CoA</text>
        <dbReference type="Rhea" id="RHEA:54728"/>
        <dbReference type="Rhea" id="RHEA-COMP:10505"/>
        <dbReference type="Rhea" id="RHEA-COMP:10506"/>
        <dbReference type="ChEBI" id="CHEBI:57288"/>
        <dbReference type="ChEBI" id="CHEBI:57384"/>
        <dbReference type="ChEBI" id="CHEBI:83144"/>
        <dbReference type="ChEBI" id="CHEBI:83145"/>
        <dbReference type="EC" id="2.1.3.15"/>
    </reaction>
</comment>
<comment type="cofactor">
    <cofactor evidence="1">
        <name>Zn(2+)</name>
        <dbReference type="ChEBI" id="CHEBI:29105"/>
    </cofactor>
    <text evidence="1">Binds 1 zinc ion per subunit.</text>
</comment>
<comment type="pathway">
    <text evidence="1">Lipid metabolism; malonyl-CoA biosynthesis; malonyl-CoA from acetyl-CoA: step 1/1.</text>
</comment>
<comment type="subunit">
    <text evidence="1">Acetyl-CoA carboxylase is a heterohexamer composed of biotin carboxyl carrier protein (AccB), biotin carboxylase (AccC) and two subunits each of ACCase subunit alpha (AccA) and ACCase subunit beta (AccD).</text>
</comment>
<comment type="subcellular location">
    <subcellularLocation>
        <location evidence="1">Cytoplasm</location>
    </subcellularLocation>
</comment>
<comment type="similarity">
    <text evidence="1">Belongs to the AccD/PCCB family.</text>
</comment>
<gene>
    <name evidence="1" type="primary">accD</name>
    <name type="ordered locus">BCE_4732</name>
</gene>
<organism>
    <name type="scientific">Bacillus cereus (strain ATCC 10987 / NRS 248)</name>
    <dbReference type="NCBI Taxonomy" id="222523"/>
    <lineage>
        <taxon>Bacteria</taxon>
        <taxon>Bacillati</taxon>
        <taxon>Bacillota</taxon>
        <taxon>Bacilli</taxon>
        <taxon>Bacillales</taxon>
        <taxon>Bacillaceae</taxon>
        <taxon>Bacillus</taxon>
        <taxon>Bacillus cereus group</taxon>
    </lineage>
</organism>